<comment type="function">
    <text evidence="1">Regulates transcriptional attenuation of the pyrimidine nucleotide (pyr) operon by binding in a uridine-dependent manner to specific sites on pyr mRNA. This disrupts an antiterminator hairpin in the RNA and favors formation of a downstream transcription terminator, leading to a reduced expression of downstream genes.</text>
</comment>
<comment type="function">
    <text evidence="1">Also displays a weak uracil phosphoribosyltransferase activity which is not physiologically significant.</text>
</comment>
<comment type="catalytic activity">
    <reaction evidence="1">
        <text>UMP + diphosphate = 5-phospho-alpha-D-ribose 1-diphosphate + uracil</text>
        <dbReference type="Rhea" id="RHEA:13017"/>
        <dbReference type="ChEBI" id="CHEBI:17568"/>
        <dbReference type="ChEBI" id="CHEBI:33019"/>
        <dbReference type="ChEBI" id="CHEBI:57865"/>
        <dbReference type="ChEBI" id="CHEBI:58017"/>
        <dbReference type="EC" id="2.4.2.9"/>
    </reaction>
</comment>
<comment type="subunit">
    <text evidence="1">Homodimer and homohexamer; in equilibrium.</text>
</comment>
<comment type="similarity">
    <text evidence="1">Belongs to the purine/pyrimidine phosphoribosyltransferase family. PyrR subfamily.</text>
</comment>
<dbReference type="EC" id="2.4.2.9" evidence="1"/>
<dbReference type="EMBL" id="CP000921">
    <property type="protein sequence ID" value="ACO24237.1"/>
    <property type="molecule type" value="Genomic_DNA"/>
</dbReference>
<dbReference type="RefSeq" id="WP_000850024.1">
    <property type="nucleotide sequence ID" value="NC_012469.1"/>
</dbReference>
<dbReference type="SMR" id="C1CR28"/>
<dbReference type="GeneID" id="45653435"/>
<dbReference type="KEGG" id="snt:SPT_0949"/>
<dbReference type="HOGENOM" id="CLU_094234_2_1_9"/>
<dbReference type="GO" id="GO:0003723">
    <property type="term" value="F:RNA binding"/>
    <property type="evidence" value="ECO:0007669"/>
    <property type="project" value="UniProtKB-UniRule"/>
</dbReference>
<dbReference type="GO" id="GO:0004845">
    <property type="term" value="F:uracil phosphoribosyltransferase activity"/>
    <property type="evidence" value="ECO:0007669"/>
    <property type="project" value="UniProtKB-UniRule"/>
</dbReference>
<dbReference type="GO" id="GO:0006353">
    <property type="term" value="P:DNA-templated transcription termination"/>
    <property type="evidence" value="ECO:0007669"/>
    <property type="project" value="UniProtKB-UniRule"/>
</dbReference>
<dbReference type="CDD" id="cd06223">
    <property type="entry name" value="PRTases_typeI"/>
    <property type="match status" value="1"/>
</dbReference>
<dbReference type="FunFam" id="3.40.50.2020:FF:000020">
    <property type="entry name" value="Bifunctional protein PyrR"/>
    <property type="match status" value="1"/>
</dbReference>
<dbReference type="Gene3D" id="3.40.50.2020">
    <property type="match status" value="1"/>
</dbReference>
<dbReference type="HAMAP" id="MF_01219">
    <property type="entry name" value="PyrR"/>
    <property type="match status" value="1"/>
</dbReference>
<dbReference type="InterPro" id="IPR000836">
    <property type="entry name" value="PRibTrfase_dom"/>
</dbReference>
<dbReference type="InterPro" id="IPR029057">
    <property type="entry name" value="PRTase-like"/>
</dbReference>
<dbReference type="InterPro" id="IPR023050">
    <property type="entry name" value="PyrR"/>
</dbReference>
<dbReference type="InterPro" id="IPR050137">
    <property type="entry name" value="PyrR_bifunctional"/>
</dbReference>
<dbReference type="NCBIfam" id="NF003548">
    <property type="entry name" value="PRK05205.1-4"/>
    <property type="match status" value="1"/>
</dbReference>
<dbReference type="NCBIfam" id="NF003549">
    <property type="entry name" value="PRK05205.1-5"/>
    <property type="match status" value="1"/>
</dbReference>
<dbReference type="PANTHER" id="PTHR11608">
    <property type="entry name" value="BIFUNCTIONAL PROTEIN PYRR"/>
    <property type="match status" value="1"/>
</dbReference>
<dbReference type="PANTHER" id="PTHR11608:SF0">
    <property type="entry name" value="BIFUNCTIONAL PROTEIN PYRR"/>
    <property type="match status" value="1"/>
</dbReference>
<dbReference type="Pfam" id="PF00156">
    <property type="entry name" value="Pribosyltran"/>
    <property type="match status" value="1"/>
</dbReference>
<dbReference type="SUPFAM" id="SSF53271">
    <property type="entry name" value="PRTase-like"/>
    <property type="match status" value="1"/>
</dbReference>
<keyword id="KW-0328">Glycosyltransferase</keyword>
<keyword id="KW-0694">RNA-binding</keyword>
<keyword id="KW-0804">Transcription</keyword>
<keyword id="KW-0805">Transcription regulation</keyword>
<keyword id="KW-0806">Transcription termination</keyword>
<keyword id="KW-0808">Transferase</keyword>
<gene>
    <name evidence="1" type="primary">pyrR</name>
    <name type="ordered locus">SPT_0949</name>
</gene>
<feature type="chain" id="PRO_1000164859" description="Bifunctional protein PyrR">
    <location>
        <begin position="1"/>
        <end position="173"/>
    </location>
</feature>
<feature type="short sequence motif" description="PRPP-binding" evidence="1">
    <location>
        <begin position="93"/>
        <end position="105"/>
    </location>
</feature>
<name>PYRR_STRZT</name>
<reference key="1">
    <citation type="journal article" date="2010" name="Genome Biol.">
        <title>Structure and dynamics of the pan-genome of Streptococcus pneumoniae and closely related species.</title>
        <authorList>
            <person name="Donati C."/>
            <person name="Hiller N.L."/>
            <person name="Tettelin H."/>
            <person name="Muzzi A."/>
            <person name="Croucher N.J."/>
            <person name="Angiuoli S.V."/>
            <person name="Oggioni M."/>
            <person name="Dunning Hotopp J.C."/>
            <person name="Hu F.Z."/>
            <person name="Riley D.R."/>
            <person name="Covacci A."/>
            <person name="Mitchell T.J."/>
            <person name="Bentley S.D."/>
            <person name="Kilian M."/>
            <person name="Ehrlich G.D."/>
            <person name="Rappuoli R."/>
            <person name="Moxon E.R."/>
            <person name="Masignani V."/>
        </authorList>
    </citation>
    <scope>NUCLEOTIDE SEQUENCE [LARGE SCALE GENOMIC DNA]</scope>
    <source>
        <strain>Taiwan19F-14</strain>
    </source>
</reference>
<accession>C1CR28</accession>
<organism>
    <name type="scientific">Streptococcus pneumoniae (strain Taiwan19F-14)</name>
    <dbReference type="NCBI Taxonomy" id="487213"/>
    <lineage>
        <taxon>Bacteria</taxon>
        <taxon>Bacillati</taxon>
        <taxon>Bacillota</taxon>
        <taxon>Bacilli</taxon>
        <taxon>Lactobacillales</taxon>
        <taxon>Streptococcaceae</taxon>
        <taxon>Streptococcus</taxon>
    </lineage>
</organism>
<proteinExistence type="inferred from homology"/>
<sequence>MKTKEVVDELTVKRAITRITYEIIERNKDLNKIVLAGIKTRGVFIAHRIQERLKQLENLSVPVVELDTKPFRDDVKSGEDTSLVSVDVTDREVILVDDVLYTGRTIRAAIDNIVGHGRPARVSLAVLVDRGHRELPIRPDYVGKNIPTSRSEEIIVEMTELDDQDRVLITEEA</sequence>
<protein>
    <recommendedName>
        <fullName evidence="1">Bifunctional protein PyrR</fullName>
    </recommendedName>
    <domain>
        <recommendedName>
            <fullName evidence="1">Pyrimidine operon regulatory protein</fullName>
        </recommendedName>
    </domain>
    <domain>
        <recommendedName>
            <fullName evidence="1">Uracil phosphoribosyltransferase</fullName>
            <shortName evidence="1">UPRTase</shortName>
            <ecNumber evidence="1">2.4.2.9</ecNumber>
        </recommendedName>
    </domain>
</protein>
<evidence type="ECO:0000255" key="1">
    <source>
        <dbReference type="HAMAP-Rule" id="MF_01219"/>
    </source>
</evidence>